<name>DSK2_SCHPO</name>
<accession>Q10169</accession>
<dbReference type="EMBL" id="CU329670">
    <property type="protein sequence ID" value="CAA93239.1"/>
    <property type="molecule type" value="Genomic_DNA"/>
</dbReference>
<dbReference type="PIR" id="T38404">
    <property type="entry name" value="T38404"/>
</dbReference>
<dbReference type="RefSeq" id="NP_594159.1">
    <property type="nucleotide sequence ID" value="NM_001019583.2"/>
</dbReference>
<dbReference type="SMR" id="Q10169"/>
<dbReference type="BioGRID" id="279120">
    <property type="interactions" value="29"/>
</dbReference>
<dbReference type="FunCoup" id="Q10169">
    <property type="interactions" value="544"/>
</dbReference>
<dbReference type="IntAct" id="Q10169">
    <property type="interactions" value="3"/>
</dbReference>
<dbReference type="MINT" id="Q10169"/>
<dbReference type="STRING" id="284812.Q10169"/>
<dbReference type="iPTMnet" id="Q10169"/>
<dbReference type="PaxDb" id="4896-SPAC26A3.16.1"/>
<dbReference type="EnsemblFungi" id="SPAC26A3.16.1">
    <property type="protein sequence ID" value="SPAC26A3.16.1:pep"/>
    <property type="gene ID" value="SPAC26A3.16"/>
</dbReference>
<dbReference type="GeneID" id="2542667"/>
<dbReference type="KEGG" id="spo:2542667"/>
<dbReference type="PomBase" id="SPAC26A3.16">
    <property type="gene designation" value="dph1"/>
</dbReference>
<dbReference type="VEuPathDB" id="FungiDB:SPAC26A3.16"/>
<dbReference type="eggNOG" id="KOG0010">
    <property type="taxonomic scope" value="Eukaryota"/>
</dbReference>
<dbReference type="HOGENOM" id="CLU_024293_0_1_1"/>
<dbReference type="InParanoid" id="Q10169"/>
<dbReference type="OMA" id="PGMDMFG"/>
<dbReference type="PhylomeDB" id="Q10169"/>
<dbReference type="Reactome" id="R-SPO-8856825">
    <property type="pathway name" value="Cargo recognition for clathrin-mediated endocytosis"/>
</dbReference>
<dbReference type="PRO" id="PR:Q10169"/>
<dbReference type="Proteomes" id="UP000002485">
    <property type="component" value="Chromosome I"/>
</dbReference>
<dbReference type="GO" id="GO:0005829">
    <property type="term" value="C:cytosol"/>
    <property type="evidence" value="ECO:0007005"/>
    <property type="project" value="PomBase"/>
</dbReference>
<dbReference type="GO" id="GO:0005634">
    <property type="term" value="C:nucleus"/>
    <property type="evidence" value="ECO:0007005"/>
    <property type="project" value="PomBase"/>
</dbReference>
<dbReference type="GO" id="GO:0031593">
    <property type="term" value="F:polyubiquitin modification-dependent protein binding"/>
    <property type="evidence" value="ECO:0000314"/>
    <property type="project" value="PomBase"/>
</dbReference>
<dbReference type="GO" id="GO:0036503">
    <property type="term" value="P:ERAD pathway"/>
    <property type="evidence" value="ECO:0000266"/>
    <property type="project" value="PomBase"/>
</dbReference>
<dbReference type="GO" id="GO:0043161">
    <property type="term" value="P:proteasome-mediated ubiquitin-dependent protein catabolic process"/>
    <property type="evidence" value="ECO:0000304"/>
    <property type="project" value="PomBase"/>
</dbReference>
<dbReference type="GO" id="GO:0006511">
    <property type="term" value="P:ubiquitin-dependent protein catabolic process"/>
    <property type="evidence" value="ECO:0000318"/>
    <property type="project" value="GO_Central"/>
</dbReference>
<dbReference type="CDD" id="cd14324">
    <property type="entry name" value="UBA_Dsk2p_like"/>
    <property type="match status" value="1"/>
</dbReference>
<dbReference type="CDD" id="cd16106">
    <property type="entry name" value="Ubl_Dsk2p_like"/>
    <property type="match status" value="1"/>
</dbReference>
<dbReference type="FunFam" id="1.10.8.10:FF:000024">
    <property type="entry name" value="Ubiquitin domain-containing protein DSK2"/>
    <property type="match status" value="1"/>
</dbReference>
<dbReference type="FunFam" id="3.10.20.90:FF:000220">
    <property type="entry name" value="Ubiquitin-like protein DskB"/>
    <property type="match status" value="1"/>
</dbReference>
<dbReference type="Gene3D" id="1.10.8.10">
    <property type="entry name" value="DNA helicase RuvA subunit, C-terminal domain"/>
    <property type="match status" value="1"/>
</dbReference>
<dbReference type="Gene3D" id="3.10.20.90">
    <property type="entry name" value="Phosphatidylinositol 3-kinase Catalytic Subunit, Chain A, domain 1"/>
    <property type="match status" value="1"/>
</dbReference>
<dbReference type="InterPro" id="IPR006636">
    <property type="entry name" value="STI1_HS-bd"/>
</dbReference>
<dbReference type="InterPro" id="IPR015940">
    <property type="entry name" value="UBA"/>
</dbReference>
<dbReference type="InterPro" id="IPR009060">
    <property type="entry name" value="UBA-like_sf"/>
</dbReference>
<dbReference type="InterPro" id="IPR015496">
    <property type="entry name" value="Ubiquilin"/>
</dbReference>
<dbReference type="InterPro" id="IPR000626">
    <property type="entry name" value="Ubiquitin-like_dom"/>
</dbReference>
<dbReference type="InterPro" id="IPR029071">
    <property type="entry name" value="Ubiquitin-like_domsf"/>
</dbReference>
<dbReference type="PANTHER" id="PTHR10677:SF3">
    <property type="entry name" value="FI07626P-RELATED"/>
    <property type="match status" value="1"/>
</dbReference>
<dbReference type="PANTHER" id="PTHR10677">
    <property type="entry name" value="UBIQUILIN"/>
    <property type="match status" value="1"/>
</dbReference>
<dbReference type="Pfam" id="PF00627">
    <property type="entry name" value="UBA"/>
    <property type="match status" value="1"/>
</dbReference>
<dbReference type="Pfam" id="PF00240">
    <property type="entry name" value="ubiquitin"/>
    <property type="match status" value="1"/>
</dbReference>
<dbReference type="SMART" id="SM00727">
    <property type="entry name" value="STI1"/>
    <property type="match status" value="2"/>
</dbReference>
<dbReference type="SMART" id="SM00165">
    <property type="entry name" value="UBA"/>
    <property type="match status" value="1"/>
</dbReference>
<dbReference type="SMART" id="SM00213">
    <property type="entry name" value="UBQ"/>
    <property type="match status" value="1"/>
</dbReference>
<dbReference type="SUPFAM" id="SSF46934">
    <property type="entry name" value="UBA-like"/>
    <property type="match status" value="1"/>
</dbReference>
<dbReference type="SUPFAM" id="SSF54236">
    <property type="entry name" value="Ubiquitin-like"/>
    <property type="match status" value="1"/>
</dbReference>
<dbReference type="PROSITE" id="PS50030">
    <property type="entry name" value="UBA"/>
    <property type="match status" value="1"/>
</dbReference>
<dbReference type="PROSITE" id="PS50053">
    <property type="entry name" value="UBIQUITIN_2"/>
    <property type="match status" value="1"/>
</dbReference>
<reference key="1">
    <citation type="journal article" date="2002" name="Nature">
        <title>The genome sequence of Schizosaccharomyces pombe.</title>
        <authorList>
            <person name="Wood V."/>
            <person name="Gwilliam R."/>
            <person name="Rajandream M.A."/>
            <person name="Lyne M.H."/>
            <person name="Lyne R."/>
            <person name="Stewart A."/>
            <person name="Sgouros J.G."/>
            <person name="Peat N."/>
            <person name="Hayles J."/>
            <person name="Baker S.G."/>
            <person name="Basham D."/>
            <person name="Bowman S."/>
            <person name="Brooks K."/>
            <person name="Brown D."/>
            <person name="Brown S."/>
            <person name="Chillingworth T."/>
            <person name="Churcher C.M."/>
            <person name="Collins M."/>
            <person name="Connor R."/>
            <person name="Cronin A."/>
            <person name="Davis P."/>
            <person name="Feltwell T."/>
            <person name="Fraser A."/>
            <person name="Gentles S."/>
            <person name="Goble A."/>
            <person name="Hamlin N."/>
            <person name="Harris D.E."/>
            <person name="Hidalgo J."/>
            <person name="Hodgson G."/>
            <person name="Holroyd S."/>
            <person name="Hornsby T."/>
            <person name="Howarth S."/>
            <person name="Huckle E.J."/>
            <person name="Hunt S."/>
            <person name="Jagels K."/>
            <person name="James K.D."/>
            <person name="Jones L."/>
            <person name="Jones M."/>
            <person name="Leather S."/>
            <person name="McDonald S."/>
            <person name="McLean J."/>
            <person name="Mooney P."/>
            <person name="Moule S."/>
            <person name="Mungall K.L."/>
            <person name="Murphy L.D."/>
            <person name="Niblett D."/>
            <person name="Odell C."/>
            <person name="Oliver K."/>
            <person name="O'Neil S."/>
            <person name="Pearson D."/>
            <person name="Quail M.A."/>
            <person name="Rabbinowitsch E."/>
            <person name="Rutherford K.M."/>
            <person name="Rutter S."/>
            <person name="Saunders D."/>
            <person name="Seeger K."/>
            <person name="Sharp S."/>
            <person name="Skelton J."/>
            <person name="Simmonds M.N."/>
            <person name="Squares R."/>
            <person name="Squares S."/>
            <person name="Stevens K."/>
            <person name="Taylor K."/>
            <person name="Taylor R.G."/>
            <person name="Tivey A."/>
            <person name="Walsh S.V."/>
            <person name="Warren T."/>
            <person name="Whitehead S."/>
            <person name="Woodward J.R."/>
            <person name="Volckaert G."/>
            <person name="Aert R."/>
            <person name="Robben J."/>
            <person name="Grymonprez B."/>
            <person name="Weltjens I."/>
            <person name="Vanstreels E."/>
            <person name="Rieger M."/>
            <person name="Schaefer M."/>
            <person name="Mueller-Auer S."/>
            <person name="Gabel C."/>
            <person name="Fuchs M."/>
            <person name="Duesterhoeft A."/>
            <person name="Fritzc C."/>
            <person name="Holzer E."/>
            <person name="Moestl D."/>
            <person name="Hilbert H."/>
            <person name="Borzym K."/>
            <person name="Langer I."/>
            <person name="Beck A."/>
            <person name="Lehrach H."/>
            <person name="Reinhardt R."/>
            <person name="Pohl T.M."/>
            <person name="Eger P."/>
            <person name="Zimmermann W."/>
            <person name="Wedler H."/>
            <person name="Wambutt R."/>
            <person name="Purnelle B."/>
            <person name="Goffeau A."/>
            <person name="Cadieu E."/>
            <person name="Dreano S."/>
            <person name="Gloux S."/>
            <person name="Lelaure V."/>
            <person name="Mottier S."/>
            <person name="Galibert F."/>
            <person name="Aves S.J."/>
            <person name="Xiang Z."/>
            <person name="Hunt C."/>
            <person name="Moore K."/>
            <person name="Hurst S.M."/>
            <person name="Lucas M."/>
            <person name="Rochet M."/>
            <person name="Gaillardin C."/>
            <person name="Tallada V.A."/>
            <person name="Garzon A."/>
            <person name="Thode G."/>
            <person name="Daga R.R."/>
            <person name="Cruzado L."/>
            <person name="Jimenez J."/>
            <person name="Sanchez M."/>
            <person name="del Rey F."/>
            <person name="Benito J."/>
            <person name="Dominguez A."/>
            <person name="Revuelta J.L."/>
            <person name="Moreno S."/>
            <person name="Armstrong J."/>
            <person name="Forsburg S.L."/>
            <person name="Cerutti L."/>
            <person name="Lowe T."/>
            <person name="McCombie W.R."/>
            <person name="Paulsen I."/>
            <person name="Potashkin J."/>
            <person name="Shpakovski G.V."/>
            <person name="Ussery D."/>
            <person name="Barrell B.G."/>
            <person name="Nurse P."/>
        </authorList>
    </citation>
    <scope>NUCLEOTIDE SEQUENCE [LARGE SCALE GENOMIC DNA]</scope>
    <source>
        <strain>972 / ATCC 24843</strain>
    </source>
</reference>
<reference key="2">
    <citation type="journal article" date="2003" name="FEBS Lett.">
        <title>Ubiquitin binding proteins protect ubiquitin conjugates from disassembly.</title>
        <authorList>
            <person name="Hartmann-Petersen R."/>
            <person name="Hendil K.B."/>
            <person name="Gordon C."/>
        </authorList>
    </citation>
    <scope>FUNCTION</scope>
</reference>
<organism>
    <name type="scientific">Schizosaccharomyces pombe (strain 972 / ATCC 24843)</name>
    <name type="common">Fission yeast</name>
    <dbReference type="NCBI Taxonomy" id="284812"/>
    <lineage>
        <taxon>Eukaryota</taxon>
        <taxon>Fungi</taxon>
        <taxon>Dikarya</taxon>
        <taxon>Ascomycota</taxon>
        <taxon>Taphrinomycotina</taxon>
        <taxon>Schizosaccharomycetes</taxon>
        <taxon>Schizosaccharomycetales</taxon>
        <taxon>Schizosaccharomycetaceae</taxon>
        <taxon>Schizosaccharomyces</taxon>
    </lineage>
</organism>
<keyword id="KW-1185">Reference proteome</keyword>
<keyword id="KW-0833">Ubl conjugation pathway</keyword>
<proteinExistence type="predicted"/>
<sequence length="354" mass="36819">MTNISLTIKAANDQKYAVTVDSESSVLALKEAIAPVADIEKERQRLIYAGRVLKDEESLKTYKIQDGHSIHLVKTLGQNPAAAATNVSDRTQQVPTNIQAGQGANNPLANLTSARYAGFNIPMPSASMFGPNPENPVPPSTEELANMLSNPMVQSSINEMFSNPQMLDMIINSSPHLRNAPPYVRQMMQSPEFRRAMTDPDTMRQMAQLHQQMGAAGIDPMSLMGGGLGGAGLGGLGGAGLGGFGGANNATAGIAGAAPVDQTAAANTIQNLLNNLGGAGFGAGLGDAGLGAGLGGAASPPAPAQDTRPPEERYAEQLSQLNEMGFVDFERNVQALRRSGGNVQGAIESLLSDL</sequence>
<evidence type="ECO:0000255" key="1">
    <source>
        <dbReference type="PROSITE-ProRule" id="PRU00212"/>
    </source>
</evidence>
<evidence type="ECO:0000255" key="2">
    <source>
        <dbReference type="PROSITE-ProRule" id="PRU00214"/>
    </source>
</evidence>
<evidence type="ECO:0000269" key="3">
    <source>
    </source>
</evidence>
<gene>
    <name type="primary">dph1</name>
    <name type="ORF">SPAC26A3.16</name>
</gene>
<protein>
    <recommendedName>
        <fullName>Deubiquitination-protection protein dph1</fullName>
    </recommendedName>
</protein>
<feature type="chain" id="PRO_0000114901" description="Deubiquitination-protection protein dph1">
    <location>
        <begin position="1"/>
        <end position="354"/>
    </location>
</feature>
<feature type="domain" description="Ubiquitin-like" evidence="2">
    <location>
        <begin position="1"/>
        <end position="78"/>
    </location>
</feature>
<feature type="domain" description="UBA" evidence="1">
    <location>
        <begin position="309"/>
        <end position="353"/>
    </location>
</feature>
<comment type="function">
    <text evidence="3">Protects ubiquitin chains against dissambly by deubiquitinating enzymes thereby promoting protein degradation.</text>
</comment>